<organism>
    <name type="scientific">Escherichia coli (strain UTI89 / UPEC)</name>
    <dbReference type="NCBI Taxonomy" id="364106"/>
    <lineage>
        <taxon>Bacteria</taxon>
        <taxon>Pseudomonadati</taxon>
        <taxon>Pseudomonadota</taxon>
        <taxon>Gammaproteobacteria</taxon>
        <taxon>Enterobacterales</taxon>
        <taxon>Enterobacteriaceae</taxon>
        <taxon>Escherichia</taxon>
    </lineage>
</organism>
<comment type="function">
    <text evidence="1">This protein specifically catalyzes the removal of signal peptides from prolipoproteins.</text>
</comment>
<comment type="catalytic activity">
    <reaction evidence="1">
        <text>Release of signal peptides from bacterial membrane prolipoproteins. Hydrolyzes -Xaa-Yaa-Zaa-|-(S,diacylglyceryl)Cys-, in which Xaa is hydrophobic (preferably Leu), and Yaa (Ala or Ser) and Zaa (Gly or Ala) have small, neutral side chains.</text>
        <dbReference type="EC" id="3.4.23.36"/>
    </reaction>
</comment>
<comment type="pathway">
    <text evidence="1">Protein modification; lipoprotein biosynthesis (signal peptide cleavage).</text>
</comment>
<comment type="subcellular location">
    <subcellularLocation>
        <location evidence="1">Cell inner membrane</location>
        <topology evidence="1">Multi-pass membrane protein</topology>
    </subcellularLocation>
</comment>
<comment type="similarity">
    <text evidence="1">Belongs to the peptidase A8 family.</text>
</comment>
<name>LSPA_ECOUT</name>
<feature type="chain" id="PRO_0000289376" description="Lipoprotein signal peptidase">
    <location>
        <begin position="1"/>
        <end position="164"/>
    </location>
</feature>
<feature type="transmembrane region" description="Helical" evidence="1">
    <location>
        <begin position="12"/>
        <end position="32"/>
    </location>
</feature>
<feature type="transmembrane region" description="Helical" evidence="1">
    <location>
        <begin position="70"/>
        <end position="90"/>
    </location>
</feature>
<feature type="transmembrane region" description="Helical" evidence="1">
    <location>
        <begin position="102"/>
        <end position="122"/>
    </location>
</feature>
<feature type="transmembrane region" description="Helical" evidence="1">
    <location>
        <begin position="137"/>
        <end position="157"/>
    </location>
</feature>
<feature type="active site" evidence="1">
    <location>
        <position position="123"/>
    </location>
</feature>
<feature type="active site" evidence="1">
    <location>
        <position position="141"/>
    </location>
</feature>
<dbReference type="EC" id="3.4.23.36" evidence="1"/>
<dbReference type="EMBL" id="CP000243">
    <property type="protein sequence ID" value="ABE05539.1"/>
    <property type="molecule type" value="Genomic_DNA"/>
</dbReference>
<dbReference type="RefSeq" id="WP_000083369.1">
    <property type="nucleotide sequence ID" value="NZ_CP064825.1"/>
</dbReference>
<dbReference type="SMR" id="Q1RGH5"/>
<dbReference type="MEROPS" id="A08.001"/>
<dbReference type="GeneID" id="75169926"/>
<dbReference type="KEGG" id="eci:UTI89_C0029"/>
<dbReference type="HOGENOM" id="CLU_083252_4_0_6"/>
<dbReference type="UniPathway" id="UPA00665"/>
<dbReference type="Proteomes" id="UP000001952">
    <property type="component" value="Chromosome"/>
</dbReference>
<dbReference type="GO" id="GO:0005886">
    <property type="term" value="C:plasma membrane"/>
    <property type="evidence" value="ECO:0007669"/>
    <property type="project" value="UniProtKB-SubCell"/>
</dbReference>
<dbReference type="GO" id="GO:0004190">
    <property type="term" value="F:aspartic-type endopeptidase activity"/>
    <property type="evidence" value="ECO:0007669"/>
    <property type="project" value="UniProtKB-UniRule"/>
</dbReference>
<dbReference type="GO" id="GO:0006508">
    <property type="term" value="P:proteolysis"/>
    <property type="evidence" value="ECO:0007669"/>
    <property type="project" value="UniProtKB-KW"/>
</dbReference>
<dbReference type="HAMAP" id="MF_00161">
    <property type="entry name" value="LspA"/>
    <property type="match status" value="1"/>
</dbReference>
<dbReference type="InterPro" id="IPR001872">
    <property type="entry name" value="Peptidase_A8"/>
</dbReference>
<dbReference type="NCBIfam" id="TIGR00077">
    <property type="entry name" value="lspA"/>
    <property type="match status" value="1"/>
</dbReference>
<dbReference type="PANTHER" id="PTHR33695">
    <property type="entry name" value="LIPOPROTEIN SIGNAL PEPTIDASE"/>
    <property type="match status" value="1"/>
</dbReference>
<dbReference type="PANTHER" id="PTHR33695:SF1">
    <property type="entry name" value="LIPOPROTEIN SIGNAL PEPTIDASE"/>
    <property type="match status" value="1"/>
</dbReference>
<dbReference type="Pfam" id="PF01252">
    <property type="entry name" value="Peptidase_A8"/>
    <property type="match status" value="1"/>
</dbReference>
<dbReference type="PRINTS" id="PR00781">
    <property type="entry name" value="LIPOSIGPTASE"/>
</dbReference>
<dbReference type="PROSITE" id="PS00855">
    <property type="entry name" value="SPASE_II"/>
    <property type="match status" value="1"/>
</dbReference>
<accession>Q1RGH5</accession>
<reference key="1">
    <citation type="journal article" date="2006" name="Proc. Natl. Acad. Sci. U.S.A.">
        <title>Identification of genes subject to positive selection in uropathogenic strains of Escherichia coli: a comparative genomics approach.</title>
        <authorList>
            <person name="Chen S.L."/>
            <person name="Hung C.-S."/>
            <person name="Xu J."/>
            <person name="Reigstad C.S."/>
            <person name="Magrini V."/>
            <person name="Sabo A."/>
            <person name="Blasiar D."/>
            <person name="Bieri T."/>
            <person name="Meyer R.R."/>
            <person name="Ozersky P."/>
            <person name="Armstrong J.R."/>
            <person name="Fulton R.S."/>
            <person name="Latreille J.P."/>
            <person name="Spieth J."/>
            <person name="Hooton T.M."/>
            <person name="Mardis E.R."/>
            <person name="Hultgren S.J."/>
            <person name="Gordon J.I."/>
        </authorList>
    </citation>
    <scope>NUCLEOTIDE SEQUENCE [LARGE SCALE GENOMIC DNA]</scope>
    <source>
        <strain>UTI89 / UPEC</strain>
    </source>
</reference>
<gene>
    <name evidence="1" type="primary">lspA</name>
    <name type="ordered locus">UTI89_C0029</name>
</gene>
<sequence>MSQSICSTGLRWLWLVVVVLIIDLGSKYLILQNFALGDTVPLFPSLNLHYARNYGAAFSFLADSGGWQRWFFAGIAIGISVILAVMMYRSKATQKLNNIAYALIIGGALGNLFDRLWHGFVVDMIDFYVGDWHFATFNLADTAICVGAALIVLEGFLPSKAKKQ</sequence>
<protein>
    <recommendedName>
        <fullName evidence="1">Lipoprotein signal peptidase</fullName>
        <ecNumber evidence="1">3.4.23.36</ecNumber>
    </recommendedName>
    <alternativeName>
        <fullName evidence="1">Prolipoprotein signal peptidase</fullName>
    </alternativeName>
    <alternativeName>
        <fullName evidence="1">Signal peptidase II</fullName>
        <shortName evidence="1">SPase II</shortName>
    </alternativeName>
</protein>
<proteinExistence type="inferred from homology"/>
<keyword id="KW-0064">Aspartyl protease</keyword>
<keyword id="KW-0997">Cell inner membrane</keyword>
<keyword id="KW-1003">Cell membrane</keyword>
<keyword id="KW-0378">Hydrolase</keyword>
<keyword id="KW-0472">Membrane</keyword>
<keyword id="KW-0645">Protease</keyword>
<keyword id="KW-0812">Transmembrane</keyword>
<keyword id="KW-1133">Transmembrane helix</keyword>
<evidence type="ECO:0000255" key="1">
    <source>
        <dbReference type="HAMAP-Rule" id="MF_00161"/>
    </source>
</evidence>